<feature type="chain" id="PRO_1000116711" description="Elongation factor Ts">
    <location>
        <begin position="1"/>
        <end position="282"/>
    </location>
</feature>
<feature type="region of interest" description="Involved in Mg(2+) ion dislocation from EF-Tu" evidence="1">
    <location>
        <begin position="80"/>
        <end position="83"/>
    </location>
</feature>
<accession>B0B8Q5</accession>
<name>EFTS_CHLT2</name>
<keyword id="KW-0963">Cytoplasm</keyword>
<keyword id="KW-0251">Elongation factor</keyword>
<keyword id="KW-0648">Protein biosynthesis</keyword>
<organism>
    <name type="scientific">Chlamydia trachomatis serovar L2 (strain ATCC VR-902B / DSM 19102 / 434/Bu)</name>
    <dbReference type="NCBI Taxonomy" id="471472"/>
    <lineage>
        <taxon>Bacteria</taxon>
        <taxon>Pseudomonadati</taxon>
        <taxon>Chlamydiota</taxon>
        <taxon>Chlamydiia</taxon>
        <taxon>Chlamydiales</taxon>
        <taxon>Chlamydiaceae</taxon>
        <taxon>Chlamydia/Chlamydophila group</taxon>
        <taxon>Chlamydia</taxon>
    </lineage>
</organism>
<dbReference type="EMBL" id="AM884176">
    <property type="protein sequence ID" value="CAP03492.1"/>
    <property type="molecule type" value="Genomic_DNA"/>
</dbReference>
<dbReference type="RefSeq" id="WP_009873290.1">
    <property type="nucleotide sequence ID" value="NC_010287.1"/>
</dbReference>
<dbReference type="RefSeq" id="YP_001654139.1">
    <property type="nucleotide sequence ID" value="NC_010287.1"/>
</dbReference>
<dbReference type="SMR" id="B0B8Q5"/>
<dbReference type="KEGG" id="ctb:CTL0048"/>
<dbReference type="PATRIC" id="fig|471472.4.peg.52"/>
<dbReference type="HOGENOM" id="CLU_047155_0_0_0"/>
<dbReference type="Proteomes" id="UP001154402">
    <property type="component" value="Chromosome"/>
</dbReference>
<dbReference type="GO" id="GO:0005737">
    <property type="term" value="C:cytoplasm"/>
    <property type="evidence" value="ECO:0007669"/>
    <property type="project" value="UniProtKB-SubCell"/>
</dbReference>
<dbReference type="GO" id="GO:0003746">
    <property type="term" value="F:translation elongation factor activity"/>
    <property type="evidence" value="ECO:0007669"/>
    <property type="project" value="UniProtKB-UniRule"/>
</dbReference>
<dbReference type="CDD" id="cd14275">
    <property type="entry name" value="UBA_EF-Ts"/>
    <property type="match status" value="1"/>
</dbReference>
<dbReference type="FunFam" id="1.10.286.20:FF:000001">
    <property type="entry name" value="Elongation factor Ts"/>
    <property type="match status" value="1"/>
</dbReference>
<dbReference type="FunFam" id="1.10.8.10:FF:000130">
    <property type="entry name" value="Elongation factor Ts"/>
    <property type="match status" value="1"/>
</dbReference>
<dbReference type="FunFam" id="3.30.479.20:FF:000035">
    <property type="entry name" value="Elongation factor Ts"/>
    <property type="match status" value="1"/>
</dbReference>
<dbReference type="Gene3D" id="1.10.286.20">
    <property type="match status" value="1"/>
</dbReference>
<dbReference type="Gene3D" id="1.10.8.10">
    <property type="entry name" value="DNA helicase RuvA subunit, C-terminal domain"/>
    <property type="match status" value="1"/>
</dbReference>
<dbReference type="Gene3D" id="3.30.479.20">
    <property type="entry name" value="Elongation factor Ts, dimerisation domain"/>
    <property type="match status" value="2"/>
</dbReference>
<dbReference type="HAMAP" id="MF_00050">
    <property type="entry name" value="EF_Ts"/>
    <property type="match status" value="1"/>
</dbReference>
<dbReference type="InterPro" id="IPR036402">
    <property type="entry name" value="EF-Ts_dimer_sf"/>
</dbReference>
<dbReference type="InterPro" id="IPR001816">
    <property type="entry name" value="Transl_elong_EFTs/EF1B"/>
</dbReference>
<dbReference type="InterPro" id="IPR014039">
    <property type="entry name" value="Transl_elong_EFTs/EF1B_dimer"/>
</dbReference>
<dbReference type="InterPro" id="IPR018101">
    <property type="entry name" value="Transl_elong_Ts_CS"/>
</dbReference>
<dbReference type="InterPro" id="IPR009060">
    <property type="entry name" value="UBA-like_sf"/>
</dbReference>
<dbReference type="NCBIfam" id="TIGR00116">
    <property type="entry name" value="tsf"/>
    <property type="match status" value="1"/>
</dbReference>
<dbReference type="PANTHER" id="PTHR11741">
    <property type="entry name" value="ELONGATION FACTOR TS"/>
    <property type="match status" value="1"/>
</dbReference>
<dbReference type="PANTHER" id="PTHR11741:SF0">
    <property type="entry name" value="ELONGATION FACTOR TS, MITOCHONDRIAL"/>
    <property type="match status" value="1"/>
</dbReference>
<dbReference type="Pfam" id="PF00889">
    <property type="entry name" value="EF_TS"/>
    <property type="match status" value="1"/>
</dbReference>
<dbReference type="SUPFAM" id="SSF54713">
    <property type="entry name" value="Elongation factor Ts (EF-Ts), dimerisation domain"/>
    <property type="match status" value="1"/>
</dbReference>
<dbReference type="SUPFAM" id="SSF46934">
    <property type="entry name" value="UBA-like"/>
    <property type="match status" value="1"/>
</dbReference>
<dbReference type="PROSITE" id="PS01126">
    <property type="entry name" value="EF_TS_1"/>
    <property type="match status" value="1"/>
</dbReference>
<dbReference type="PROSITE" id="PS01127">
    <property type="entry name" value="EF_TS_2"/>
    <property type="match status" value="1"/>
</dbReference>
<comment type="function">
    <text evidence="1">Associates with the EF-Tu.GDP complex and induces the exchange of GDP to GTP. It remains bound to the aminoacyl-tRNA.EF-Tu.GTP complex up to the GTP hydrolysis stage on the ribosome.</text>
</comment>
<comment type="subcellular location">
    <subcellularLocation>
        <location evidence="1">Cytoplasm</location>
    </subcellularLocation>
</comment>
<comment type="similarity">
    <text evidence="1">Belongs to the EF-Ts family.</text>
</comment>
<reference key="1">
    <citation type="journal article" date="2008" name="Genome Res.">
        <title>Chlamydia trachomatis: genome sequence analysis of lymphogranuloma venereum isolates.</title>
        <authorList>
            <person name="Thomson N.R."/>
            <person name="Holden M.T.G."/>
            <person name="Carder C."/>
            <person name="Lennard N."/>
            <person name="Lockey S.J."/>
            <person name="Marsh P."/>
            <person name="Skipp P."/>
            <person name="O'Connor C.D."/>
            <person name="Goodhead I."/>
            <person name="Norbertzcak H."/>
            <person name="Harris B."/>
            <person name="Ormond D."/>
            <person name="Rance R."/>
            <person name="Quail M.A."/>
            <person name="Parkhill J."/>
            <person name="Stephens R.S."/>
            <person name="Clarke I.N."/>
        </authorList>
    </citation>
    <scope>NUCLEOTIDE SEQUENCE [LARGE SCALE GENOMIC DNA]</scope>
    <source>
        <strain>ATCC VR-902B / DSM 19102 / 434/Bu</strain>
    </source>
</reference>
<sequence length="282" mass="30953">MSDFSMETLKNLRQQTGVGLTKCKEALEHAKGNLEDAVVYLRKLGLASAGKKEHRETKEGVIAARVDERGAALVEVNVETDFVANNSVFRAFVTSLLSDLLDHKLSDVEALARVMSSQEPSLSVEELKAVTMQTVGENIRISRAFYTPVNSGQSVGIYSHGNGKAVAIVFLSGSENQEALAKDIAMHIVASQPQFLSKESVPQEILEREREVFSSQVAGKPQEVVEKITQGKFKAFFQEACLLEQAFIKDPEVTIQGLIDRAAKASGEPLRVEHFVFWKMGA</sequence>
<gene>
    <name evidence="1" type="primary">tsf</name>
    <name type="ordered locus">CTL0048</name>
</gene>
<protein>
    <recommendedName>
        <fullName evidence="1">Elongation factor Ts</fullName>
        <shortName evidence="1">EF-Ts</shortName>
    </recommendedName>
</protein>
<evidence type="ECO:0000255" key="1">
    <source>
        <dbReference type="HAMAP-Rule" id="MF_00050"/>
    </source>
</evidence>
<proteinExistence type="inferred from homology"/>